<organism>
    <name type="scientific">Acinetobacter baumannii (strain AB0057)</name>
    <dbReference type="NCBI Taxonomy" id="480119"/>
    <lineage>
        <taxon>Bacteria</taxon>
        <taxon>Pseudomonadati</taxon>
        <taxon>Pseudomonadota</taxon>
        <taxon>Gammaproteobacteria</taxon>
        <taxon>Moraxellales</taxon>
        <taxon>Moraxellaceae</taxon>
        <taxon>Acinetobacter</taxon>
        <taxon>Acinetobacter calcoaceticus/baumannii complex</taxon>
    </lineage>
</organism>
<gene>
    <name evidence="1" type="primary">trmA</name>
    <name type="ordered locus">AB57_1768</name>
</gene>
<reference key="1">
    <citation type="journal article" date="2008" name="J. Bacteriol.">
        <title>Comparative genome sequence analysis of multidrug-resistant Acinetobacter baumannii.</title>
        <authorList>
            <person name="Adams M.D."/>
            <person name="Goglin K."/>
            <person name="Molyneaux N."/>
            <person name="Hujer K.M."/>
            <person name="Lavender H."/>
            <person name="Jamison J.J."/>
            <person name="MacDonald I.J."/>
            <person name="Martin K.M."/>
            <person name="Russo T."/>
            <person name="Campagnari A.A."/>
            <person name="Hujer A.M."/>
            <person name="Bonomo R.A."/>
            <person name="Gill S.R."/>
        </authorList>
    </citation>
    <scope>NUCLEOTIDE SEQUENCE [LARGE SCALE GENOMIC DNA]</scope>
    <source>
        <strain>AB0057</strain>
    </source>
</reference>
<sequence>MTSSYRQQLQAKIDRITTQFSEFTPPTLEVFESPEQHFRMRAEFRIWHTENDMFYAMFERNDDGKQKTVVRIDEFPIADKSINDLMPLLLAELKANSLLSQRLFEVDFLATLSGEMLVTLIYHRKLNQEWEQAAKALAEKLNIKIMGRSRGQKIVIGDDFVVEEFELLNRSFKYKQIESSFTQPNAQVCKKMLQWACDAAEGSKKHLLELYCGNGNFTLPLSLKFERVLATELAKSSVYAAQWNIEQNQIDNIQVARLSAEEFTQAYQGEREFRRLQEADIDIQSYDFGTVFVDPPRAGIDDETLKLLQGFERIIYISCNPDTLYENLKTLTQTHRVTKFALFDQFPYTHHVESGVLLEKI</sequence>
<evidence type="ECO:0000255" key="1">
    <source>
        <dbReference type="HAMAP-Rule" id="MF_01011"/>
    </source>
</evidence>
<feature type="chain" id="PRO_0000388539" description="tRNA/tmRNA (uracil-C(5))-methyltransferase">
    <location>
        <begin position="1"/>
        <end position="361"/>
    </location>
</feature>
<feature type="active site" description="Nucleophile" evidence="1">
    <location>
        <position position="319"/>
    </location>
</feature>
<feature type="active site" description="Proton acceptor" evidence="1">
    <location>
        <position position="353"/>
    </location>
</feature>
<feature type="binding site" evidence="1">
    <location>
        <position position="183"/>
    </location>
    <ligand>
        <name>S-adenosyl-L-methionine</name>
        <dbReference type="ChEBI" id="CHEBI:59789"/>
    </ligand>
</feature>
<feature type="binding site" evidence="1">
    <location>
        <position position="211"/>
    </location>
    <ligand>
        <name>S-adenosyl-L-methionine</name>
        <dbReference type="ChEBI" id="CHEBI:59789"/>
    </ligand>
</feature>
<feature type="binding site" evidence="1">
    <location>
        <position position="216"/>
    </location>
    <ligand>
        <name>S-adenosyl-L-methionine</name>
        <dbReference type="ChEBI" id="CHEBI:59789"/>
    </ligand>
</feature>
<feature type="binding site" evidence="1">
    <location>
        <position position="232"/>
    </location>
    <ligand>
        <name>S-adenosyl-L-methionine</name>
        <dbReference type="ChEBI" id="CHEBI:59789"/>
    </ligand>
</feature>
<feature type="binding site" evidence="1">
    <location>
        <position position="294"/>
    </location>
    <ligand>
        <name>S-adenosyl-L-methionine</name>
        <dbReference type="ChEBI" id="CHEBI:59789"/>
    </ligand>
</feature>
<name>TRMA_ACIB5</name>
<protein>
    <recommendedName>
        <fullName evidence="1">tRNA/tmRNA (uracil-C(5))-methyltransferase</fullName>
        <ecNumber evidence="1">2.1.1.-</ecNumber>
        <ecNumber evidence="1">2.1.1.35</ecNumber>
    </recommendedName>
    <alternativeName>
        <fullName evidence="1">tRNA (uracil(54)-C(5))-methyltransferase</fullName>
    </alternativeName>
    <alternativeName>
        <fullName evidence="1">tRNA(m5U54)-methyltransferase</fullName>
        <shortName evidence="1">RUMT</shortName>
    </alternativeName>
    <alternativeName>
        <fullName evidence="1">tmRNA (uracil(341)-C(5))-methyltransferase</fullName>
    </alternativeName>
</protein>
<proteinExistence type="inferred from homology"/>
<accession>B7I4Y4</accession>
<dbReference type="EC" id="2.1.1.-" evidence="1"/>
<dbReference type="EC" id="2.1.1.35" evidence="1"/>
<dbReference type="EMBL" id="CP001182">
    <property type="protein sequence ID" value="ACJ41149.1"/>
    <property type="molecule type" value="Genomic_DNA"/>
</dbReference>
<dbReference type="RefSeq" id="WP_000204682.1">
    <property type="nucleotide sequence ID" value="NC_011586.2"/>
</dbReference>
<dbReference type="SMR" id="B7I4Y4"/>
<dbReference type="KEGG" id="abn:AB57_1768"/>
<dbReference type="HOGENOM" id="CLU_043022_0_0_6"/>
<dbReference type="Proteomes" id="UP000007094">
    <property type="component" value="Chromosome"/>
</dbReference>
<dbReference type="GO" id="GO:0005829">
    <property type="term" value="C:cytosol"/>
    <property type="evidence" value="ECO:0007669"/>
    <property type="project" value="TreeGrafter"/>
</dbReference>
<dbReference type="GO" id="GO:0019843">
    <property type="term" value="F:rRNA binding"/>
    <property type="evidence" value="ECO:0007669"/>
    <property type="project" value="TreeGrafter"/>
</dbReference>
<dbReference type="GO" id="GO:0030697">
    <property type="term" value="F:tRNA (uracil(54)-C5)-methyltransferase activity, S-adenosyl methionine-dependent"/>
    <property type="evidence" value="ECO:0007669"/>
    <property type="project" value="UniProtKB-UniRule"/>
</dbReference>
<dbReference type="GO" id="GO:0000049">
    <property type="term" value="F:tRNA binding"/>
    <property type="evidence" value="ECO:0007669"/>
    <property type="project" value="TreeGrafter"/>
</dbReference>
<dbReference type="GO" id="GO:0030488">
    <property type="term" value="P:tRNA methylation"/>
    <property type="evidence" value="ECO:0007669"/>
    <property type="project" value="UniProtKB-UniRule"/>
</dbReference>
<dbReference type="CDD" id="cd02440">
    <property type="entry name" value="AdoMet_MTases"/>
    <property type="match status" value="1"/>
</dbReference>
<dbReference type="FunFam" id="2.40.50.1070:FF:000001">
    <property type="entry name" value="tRNA/tmRNA (uracil-C(5))-methyltransferase"/>
    <property type="match status" value="1"/>
</dbReference>
<dbReference type="FunFam" id="3.40.50.150:FF:000012">
    <property type="entry name" value="tRNA/tmRNA (uracil-C(5))-methyltransferase"/>
    <property type="match status" value="1"/>
</dbReference>
<dbReference type="Gene3D" id="2.40.50.1070">
    <property type="match status" value="1"/>
</dbReference>
<dbReference type="Gene3D" id="3.40.50.150">
    <property type="entry name" value="Vaccinia Virus protein VP39"/>
    <property type="match status" value="1"/>
</dbReference>
<dbReference type="HAMAP" id="MF_01011">
    <property type="entry name" value="RNA_methyltr_TrmA"/>
    <property type="match status" value="1"/>
</dbReference>
<dbReference type="InterPro" id="IPR030390">
    <property type="entry name" value="MeTrfase_TrmA_AS"/>
</dbReference>
<dbReference type="InterPro" id="IPR030391">
    <property type="entry name" value="MeTrfase_TrmA_CS"/>
</dbReference>
<dbReference type="InterPro" id="IPR029063">
    <property type="entry name" value="SAM-dependent_MTases_sf"/>
</dbReference>
<dbReference type="InterPro" id="IPR011869">
    <property type="entry name" value="TrmA_MeTrfase"/>
</dbReference>
<dbReference type="InterPro" id="IPR010280">
    <property type="entry name" value="U5_MeTrfase_fam"/>
</dbReference>
<dbReference type="NCBIfam" id="TIGR02143">
    <property type="entry name" value="trmA_only"/>
    <property type="match status" value="1"/>
</dbReference>
<dbReference type="PANTHER" id="PTHR47790">
    <property type="entry name" value="TRNA/TMRNA (URACIL-C(5))-METHYLTRANSFERASE"/>
    <property type="match status" value="1"/>
</dbReference>
<dbReference type="PANTHER" id="PTHR47790:SF2">
    <property type="entry name" value="TRNA_TMRNA (URACIL-C(5))-METHYLTRANSFERASE"/>
    <property type="match status" value="1"/>
</dbReference>
<dbReference type="Pfam" id="PF05958">
    <property type="entry name" value="tRNA_U5-meth_tr"/>
    <property type="match status" value="1"/>
</dbReference>
<dbReference type="SUPFAM" id="SSF53335">
    <property type="entry name" value="S-adenosyl-L-methionine-dependent methyltransferases"/>
    <property type="match status" value="1"/>
</dbReference>
<dbReference type="PROSITE" id="PS51687">
    <property type="entry name" value="SAM_MT_RNA_M5U"/>
    <property type="match status" value="1"/>
</dbReference>
<dbReference type="PROSITE" id="PS01230">
    <property type="entry name" value="TRMA_1"/>
    <property type="match status" value="1"/>
</dbReference>
<dbReference type="PROSITE" id="PS01231">
    <property type="entry name" value="TRMA_2"/>
    <property type="match status" value="1"/>
</dbReference>
<keyword id="KW-0489">Methyltransferase</keyword>
<keyword id="KW-0949">S-adenosyl-L-methionine</keyword>
<keyword id="KW-0808">Transferase</keyword>
<keyword id="KW-0819">tRNA processing</keyword>
<comment type="function">
    <text evidence="1">Dual-specificity methyltransferase that catalyzes the formation of 5-methyluridine at position 54 (m5U54) in all tRNAs, and that of position 341 (m5U341) in tmRNA (transfer-mRNA).</text>
</comment>
<comment type="catalytic activity">
    <reaction evidence="1">
        <text>uridine(54) in tRNA + S-adenosyl-L-methionine = 5-methyluridine(54) in tRNA + S-adenosyl-L-homocysteine + H(+)</text>
        <dbReference type="Rhea" id="RHEA:42712"/>
        <dbReference type="Rhea" id="RHEA-COMP:10167"/>
        <dbReference type="Rhea" id="RHEA-COMP:10193"/>
        <dbReference type="ChEBI" id="CHEBI:15378"/>
        <dbReference type="ChEBI" id="CHEBI:57856"/>
        <dbReference type="ChEBI" id="CHEBI:59789"/>
        <dbReference type="ChEBI" id="CHEBI:65315"/>
        <dbReference type="ChEBI" id="CHEBI:74447"/>
        <dbReference type="EC" id="2.1.1.35"/>
    </reaction>
</comment>
<comment type="catalytic activity">
    <reaction evidence="1">
        <text>uridine(341) in tmRNA + S-adenosyl-L-methionine = 5-methyluridine(341) in tmRNA + S-adenosyl-L-homocysteine + H(+)</text>
        <dbReference type="Rhea" id="RHEA:43612"/>
        <dbReference type="Rhea" id="RHEA-COMP:10630"/>
        <dbReference type="Rhea" id="RHEA-COMP:10631"/>
        <dbReference type="ChEBI" id="CHEBI:15378"/>
        <dbReference type="ChEBI" id="CHEBI:57856"/>
        <dbReference type="ChEBI" id="CHEBI:59789"/>
        <dbReference type="ChEBI" id="CHEBI:65315"/>
        <dbReference type="ChEBI" id="CHEBI:74447"/>
    </reaction>
</comment>
<comment type="similarity">
    <text evidence="1">Belongs to the class I-like SAM-binding methyltransferase superfamily. RNA M5U methyltransferase family. TrmA subfamily.</text>
</comment>